<keyword id="KW-1185">Reference proteome</keyword>
<keyword id="KW-0687">Ribonucleoprotein</keyword>
<keyword id="KW-0689">Ribosomal protein</keyword>
<keyword id="KW-0694">RNA-binding</keyword>
<keyword id="KW-0699">rRNA-binding</keyword>
<keyword id="KW-0820">tRNA-binding</keyword>
<protein>
    <recommendedName>
        <fullName evidence="1">Small ribosomal subunit protein uS7</fullName>
    </recommendedName>
    <alternativeName>
        <fullName evidence="2">30S ribosomal protein S7</fullName>
    </alternativeName>
</protein>
<gene>
    <name evidence="1" type="primary">rpsG</name>
    <name type="ordered locus">cauri_0377</name>
</gene>
<sequence length="155" mass="17559">MRKNAAPKRPVVKDPVYNSEQVTMLVNKILRDGKKSTAERIVYGALEVCREKTGTDPVGTLEKALGNIRPDLEVRSRRVGGATYQVPVEVKPARSNTLALRWLVTFTRQRRENSMIERLANEILDASNGLGASVKRREDTHKMAEANRAFAHYRW</sequence>
<comment type="function">
    <text evidence="1">One of the primary rRNA binding proteins, it binds directly to 16S rRNA where it nucleates assembly of the head domain of the 30S subunit. Is located at the subunit interface close to the decoding center, probably blocks exit of the E-site tRNA.</text>
</comment>
<comment type="subunit">
    <text evidence="1">Part of the 30S ribosomal subunit. Contacts proteins S9 and S11.</text>
</comment>
<comment type="similarity">
    <text evidence="1">Belongs to the universal ribosomal protein uS7 family.</text>
</comment>
<organism>
    <name type="scientific">Corynebacterium aurimucosum (strain ATCC 700975 / DSM 44827 / CIP 107346 / CN-1)</name>
    <name type="common">Corynebacterium nigricans</name>
    <dbReference type="NCBI Taxonomy" id="548476"/>
    <lineage>
        <taxon>Bacteria</taxon>
        <taxon>Bacillati</taxon>
        <taxon>Actinomycetota</taxon>
        <taxon>Actinomycetes</taxon>
        <taxon>Mycobacteriales</taxon>
        <taxon>Corynebacteriaceae</taxon>
        <taxon>Corynebacterium</taxon>
    </lineage>
</organism>
<proteinExistence type="inferred from homology"/>
<evidence type="ECO:0000255" key="1">
    <source>
        <dbReference type="HAMAP-Rule" id="MF_00480"/>
    </source>
</evidence>
<evidence type="ECO:0000305" key="2"/>
<feature type="chain" id="PRO_1000135595" description="Small ribosomal subunit protein uS7">
    <location>
        <begin position="1"/>
        <end position="155"/>
    </location>
</feature>
<reference key="1">
    <citation type="journal article" date="2010" name="BMC Genomics">
        <title>Complete genome sequence and lifestyle of black-pigmented Corynebacterium aurimucosum ATCC 700975 (formerly C. nigricans CN-1) isolated from a vaginal swab of a woman with spontaneous abortion.</title>
        <authorList>
            <person name="Trost E."/>
            <person name="Gotker S."/>
            <person name="Schneider J."/>
            <person name="Schneiker-Bekel S."/>
            <person name="Szczepanowski R."/>
            <person name="Tilker A."/>
            <person name="Viehoever P."/>
            <person name="Arnold W."/>
            <person name="Bekel T."/>
            <person name="Blom J."/>
            <person name="Gartemann K.H."/>
            <person name="Linke B."/>
            <person name="Goesmann A."/>
            <person name="Puhler A."/>
            <person name="Shukla S.K."/>
            <person name="Tauch A."/>
        </authorList>
    </citation>
    <scope>NUCLEOTIDE SEQUENCE [LARGE SCALE GENOMIC DNA]</scope>
    <source>
        <strain>ATCC 700975 / DSM 44827 / CIP 107346 / CN-1</strain>
    </source>
</reference>
<accession>C3PKP0</accession>
<dbReference type="EMBL" id="CP001601">
    <property type="protein sequence ID" value="ACP31976.1"/>
    <property type="molecule type" value="Genomic_DNA"/>
</dbReference>
<dbReference type="RefSeq" id="WP_010189692.1">
    <property type="nucleotide sequence ID" value="NZ_ACLH01000068.1"/>
</dbReference>
<dbReference type="SMR" id="C3PKP0"/>
<dbReference type="STRING" id="548476.cauri_0377"/>
<dbReference type="GeneID" id="31922996"/>
<dbReference type="KEGG" id="car:cauri_0377"/>
<dbReference type="eggNOG" id="COG0049">
    <property type="taxonomic scope" value="Bacteria"/>
</dbReference>
<dbReference type="HOGENOM" id="CLU_072226_1_1_11"/>
<dbReference type="OrthoDB" id="9807653at2"/>
<dbReference type="Proteomes" id="UP000002077">
    <property type="component" value="Chromosome"/>
</dbReference>
<dbReference type="GO" id="GO:0015935">
    <property type="term" value="C:small ribosomal subunit"/>
    <property type="evidence" value="ECO:0007669"/>
    <property type="project" value="InterPro"/>
</dbReference>
<dbReference type="GO" id="GO:0019843">
    <property type="term" value="F:rRNA binding"/>
    <property type="evidence" value="ECO:0007669"/>
    <property type="project" value="UniProtKB-UniRule"/>
</dbReference>
<dbReference type="GO" id="GO:0003735">
    <property type="term" value="F:structural constituent of ribosome"/>
    <property type="evidence" value="ECO:0007669"/>
    <property type="project" value="InterPro"/>
</dbReference>
<dbReference type="GO" id="GO:0000049">
    <property type="term" value="F:tRNA binding"/>
    <property type="evidence" value="ECO:0007669"/>
    <property type="project" value="UniProtKB-UniRule"/>
</dbReference>
<dbReference type="GO" id="GO:0006412">
    <property type="term" value="P:translation"/>
    <property type="evidence" value="ECO:0007669"/>
    <property type="project" value="UniProtKB-UniRule"/>
</dbReference>
<dbReference type="CDD" id="cd14869">
    <property type="entry name" value="uS7_Bacteria"/>
    <property type="match status" value="1"/>
</dbReference>
<dbReference type="FunFam" id="1.10.455.10:FF:000001">
    <property type="entry name" value="30S ribosomal protein S7"/>
    <property type="match status" value="1"/>
</dbReference>
<dbReference type="Gene3D" id="1.10.455.10">
    <property type="entry name" value="Ribosomal protein S7 domain"/>
    <property type="match status" value="1"/>
</dbReference>
<dbReference type="HAMAP" id="MF_00480_B">
    <property type="entry name" value="Ribosomal_uS7_B"/>
    <property type="match status" value="1"/>
</dbReference>
<dbReference type="InterPro" id="IPR000235">
    <property type="entry name" value="Ribosomal_uS7"/>
</dbReference>
<dbReference type="InterPro" id="IPR005717">
    <property type="entry name" value="Ribosomal_uS7_bac/org-type"/>
</dbReference>
<dbReference type="InterPro" id="IPR023798">
    <property type="entry name" value="Ribosomal_uS7_dom"/>
</dbReference>
<dbReference type="InterPro" id="IPR036823">
    <property type="entry name" value="Ribosomal_uS7_dom_sf"/>
</dbReference>
<dbReference type="NCBIfam" id="TIGR01029">
    <property type="entry name" value="rpsG_bact"/>
    <property type="match status" value="1"/>
</dbReference>
<dbReference type="PANTHER" id="PTHR11205">
    <property type="entry name" value="RIBOSOMAL PROTEIN S7"/>
    <property type="match status" value="1"/>
</dbReference>
<dbReference type="Pfam" id="PF00177">
    <property type="entry name" value="Ribosomal_S7"/>
    <property type="match status" value="1"/>
</dbReference>
<dbReference type="PIRSF" id="PIRSF002122">
    <property type="entry name" value="RPS7p_RPS7a_RPS5e_RPS7o"/>
    <property type="match status" value="1"/>
</dbReference>
<dbReference type="SUPFAM" id="SSF47973">
    <property type="entry name" value="Ribosomal protein S7"/>
    <property type="match status" value="1"/>
</dbReference>
<name>RS7_CORA7</name>